<accession>Q8NGJ9</accession>
<accession>Q6IFH9</accession>
<comment type="function">
    <text evidence="3">Odorant receptor.</text>
</comment>
<comment type="subcellular location">
    <subcellularLocation>
        <location>Cell membrane</location>
        <topology>Multi-pass membrane protein</topology>
    </subcellularLocation>
</comment>
<comment type="similarity">
    <text evidence="2">Belongs to the G-protein coupled receptor 1 family.</text>
</comment>
<comment type="sequence caution" evidence="3">
    <conflict type="erroneous initiation">
        <sequence resource="EMBL-CDS" id="DAA04681"/>
    </conflict>
</comment>
<comment type="online information" name="Human Olfactory Receptor Data Exploratorium (HORDE)">
    <link uri="http://genome.weizmann.ac.il/horde/card/index/symbol:OR51T1"/>
</comment>
<gene>
    <name type="primary">OR51T1</name>
</gene>
<dbReference type="EMBL" id="AB065795">
    <property type="protein sequence ID" value="BAC06014.1"/>
    <property type="molecule type" value="Genomic_DNA"/>
</dbReference>
<dbReference type="EMBL" id="AC011711">
    <property type="status" value="NOT_ANNOTATED_CDS"/>
    <property type="molecule type" value="Genomic_DNA"/>
</dbReference>
<dbReference type="EMBL" id="BK004283">
    <property type="protein sequence ID" value="DAA04681.1"/>
    <property type="status" value="ALT_INIT"/>
    <property type="molecule type" value="Genomic_DNA"/>
</dbReference>
<dbReference type="CCDS" id="CCDS31363.2"/>
<dbReference type="RefSeq" id="NP_001004759.2">
    <property type="nucleotide sequence ID" value="NM_001004759.3"/>
</dbReference>
<dbReference type="SMR" id="Q8NGJ9"/>
<dbReference type="FunCoup" id="Q8NGJ9">
    <property type="interactions" value="452"/>
</dbReference>
<dbReference type="STRING" id="9606.ENSP00000369738"/>
<dbReference type="GlyCosmos" id="Q8NGJ9">
    <property type="glycosylation" value="2 sites, No reported glycans"/>
</dbReference>
<dbReference type="GlyGen" id="Q8NGJ9">
    <property type="glycosylation" value="2 sites"/>
</dbReference>
<dbReference type="BioMuta" id="OR51T1"/>
<dbReference type="DMDM" id="38372711"/>
<dbReference type="PaxDb" id="9606-ENSP00000369738"/>
<dbReference type="Antibodypedia" id="62714">
    <property type="antibodies" value="97 antibodies from 23 providers"/>
</dbReference>
<dbReference type="DNASU" id="401665"/>
<dbReference type="Ensembl" id="ENST00000322049.1">
    <property type="protein sequence ID" value="ENSP00000322679.1"/>
    <property type="gene ID" value="ENSG00000176900.2"/>
</dbReference>
<dbReference type="GeneID" id="401665"/>
<dbReference type="KEGG" id="hsa:401665"/>
<dbReference type="MANE-Select" id="ENST00000322049.1">
    <property type="protein sequence ID" value="ENSP00000322679.1"/>
    <property type="RefSeq nucleotide sequence ID" value="NM_001004759.3"/>
    <property type="RefSeq protein sequence ID" value="NP_001004759.2"/>
</dbReference>
<dbReference type="UCSC" id="uc010qyp.2">
    <property type="organism name" value="human"/>
</dbReference>
<dbReference type="AGR" id="HGNC:15205"/>
<dbReference type="CTD" id="401665"/>
<dbReference type="GeneCards" id="OR51T1"/>
<dbReference type="HGNC" id="HGNC:15205">
    <property type="gene designation" value="OR51T1"/>
</dbReference>
<dbReference type="HPA" id="ENSG00000176900">
    <property type="expression patterns" value="Not detected"/>
</dbReference>
<dbReference type="neXtProt" id="NX_Q8NGJ9"/>
<dbReference type="OpenTargets" id="ENSG00000176900"/>
<dbReference type="VEuPathDB" id="HostDB:ENSG00000176900"/>
<dbReference type="eggNOG" id="ENOG502RU2C">
    <property type="taxonomic scope" value="Eukaryota"/>
</dbReference>
<dbReference type="GeneTree" id="ENSGT01130000278299"/>
<dbReference type="HOGENOM" id="CLU_012526_0_0_1"/>
<dbReference type="InParanoid" id="Q8NGJ9"/>
<dbReference type="OrthoDB" id="9444602at2759"/>
<dbReference type="PAN-GO" id="Q8NGJ9">
    <property type="GO annotations" value="2 GO annotations based on evolutionary models"/>
</dbReference>
<dbReference type="PhylomeDB" id="Q8NGJ9"/>
<dbReference type="TreeFam" id="TF342735"/>
<dbReference type="PathwayCommons" id="Q8NGJ9"/>
<dbReference type="Reactome" id="R-HSA-9752946">
    <property type="pathway name" value="Expression and translocation of olfactory receptors"/>
</dbReference>
<dbReference type="BioGRID-ORCS" id="401665">
    <property type="hits" value="11 hits in 745 CRISPR screens"/>
</dbReference>
<dbReference type="GeneWiki" id="OR51T1"/>
<dbReference type="GenomeRNAi" id="401665"/>
<dbReference type="Pharos" id="Q8NGJ9">
    <property type="development level" value="Tdark"/>
</dbReference>
<dbReference type="PRO" id="PR:Q8NGJ9"/>
<dbReference type="Proteomes" id="UP000005640">
    <property type="component" value="Chromosome 11"/>
</dbReference>
<dbReference type="RNAct" id="Q8NGJ9">
    <property type="molecule type" value="protein"/>
</dbReference>
<dbReference type="Bgee" id="ENSG00000176900">
    <property type="expression patterns" value="Expressed in prostate gland"/>
</dbReference>
<dbReference type="ExpressionAtlas" id="Q8NGJ9">
    <property type="expression patterns" value="baseline and differential"/>
</dbReference>
<dbReference type="GO" id="GO:0005886">
    <property type="term" value="C:plasma membrane"/>
    <property type="evidence" value="ECO:0000318"/>
    <property type="project" value="GO_Central"/>
</dbReference>
<dbReference type="GO" id="GO:0004930">
    <property type="term" value="F:G protein-coupled receptor activity"/>
    <property type="evidence" value="ECO:0007669"/>
    <property type="project" value="UniProtKB-KW"/>
</dbReference>
<dbReference type="GO" id="GO:0004984">
    <property type="term" value="F:olfactory receptor activity"/>
    <property type="evidence" value="ECO:0000318"/>
    <property type="project" value="GO_Central"/>
</dbReference>
<dbReference type="CDD" id="cd15222">
    <property type="entry name" value="7tmA_OR51-like"/>
    <property type="match status" value="1"/>
</dbReference>
<dbReference type="FunFam" id="1.20.1070.10:FF:000002">
    <property type="entry name" value="Olfactory receptor"/>
    <property type="match status" value="1"/>
</dbReference>
<dbReference type="Gene3D" id="1.20.1070.10">
    <property type="entry name" value="Rhodopsin 7-helix transmembrane proteins"/>
    <property type="match status" value="1"/>
</dbReference>
<dbReference type="InterPro" id="IPR000276">
    <property type="entry name" value="GPCR_Rhodpsn"/>
</dbReference>
<dbReference type="InterPro" id="IPR017452">
    <property type="entry name" value="GPCR_Rhodpsn_7TM"/>
</dbReference>
<dbReference type="InterPro" id="IPR000725">
    <property type="entry name" value="Olfact_rcpt"/>
</dbReference>
<dbReference type="InterPro" id="IPR050402">
    <property type="entry name" value="OR51/52/56-like"/>
</dbReference>
<dbReference type="PANTHER" id="PTHR26450:SF6">
    <property type="entry name" value="OLFACTORY RECEPTOR 51T1"/>
    <property type="match status" value="1"/>
</dbReference>
<dbReference type="PANTHER" id="PTHR26450">
    <property type="entry name" value="OLFACTORY RECEPTOR 56B1-RELATED"/>
    <property type="match status" value="1"/>
</dbReference>
<dbReference type="Pfam" id="PF13853">
    <property type="entry name" value="7tm_4"/>
    <property type="match status" value="1"/>
</dbReference>
<dbReference type="PRINTS" id="PR00237">
    <property type="entry name" value="GPCRRHODOPSN"/>
</dbReference>
<dbReference type="PRINTS" id="PR00245">
    <property type="entry name" value="OLFACTORYR"/>
</dbReference>
<dbReference type="SUPFAM" id="SSF81321">
    <property type="entry name" value="Family A G protein-coupled receptor-like"/>
    <property type="match status" value="1"/>
</dbReference>
<dbReference type="PROSITE" id="PS00237">
    <property type="entry name" value="G_PROTEIN_RECEP_F1_1"/>
    <property type="match status" value="1"/>
</dbReference>
<dbReference type="PROSITE" id="PS50262">
    <property type="entry name" value="G_PROTEIN_RECEP_F1_2"/>
    <property type="match status" value="1"/>
</dbReference>
<feature type="chain" id="PRO_0000150763" description="Olfactory receptor 51T1">
    <location>
        <begin position="1"/>
        <end position="327"/>
    </location>
</feature>
<feature type="topological domain" description="Extracellular" evidence="1">
    <location>
        <begin position="1"/>
        <end position="27"/>
    </location>
</feature>
<feature type="transmembrane region" description="Helical; Name=1" evidence="1">
    <location>
        <begin position="28"/>
        <end position="48"/>
    </location>
</feature>
<feature type="topological domain" description="Cytoplasmic" evidence="1">
    <location>
        <begin position="49"/>
        <end position="56"/>
    </location>
</feature>
<feature type="transmembrane region" description="Helical; Name=2" evidence="1">
    <location>
        <begin position="57"/>
        <end position="77"/>
    </location>
</feature>
<feature type="topological domain" description="Extracellular" evidence="1">
    <location>
        <begin position="78"/>
        <end position="101"/>
    </location>
</feature>
<feature type="transmembrane region" description="Helical; Name=3" evidence="1">
    <location>
        <begin position="102"/>
        <end position="122"/>
    </location>
</feature>
<feature type="topological domain" description="Cytoplasmic" evidence="1">
    <location>
        <begin position="123"/>
        <end position="141"/>
    </location>
</feature>
<feature type="transmembrane region" description="Helical; Name=4" evidence="1">
    <location>
        <begin position="142"/>
        <end position="162"/>
    </location>
</feature>
<feature type="topological domain" description="Extracellular" evidence="1">
    <location>
        <begin position="163"/>
        <end position="198"/>
    </location>
</feature>
<feature type="transmembrane region" description="Helical; Name=5" evidence="1">
    <location>
        <begin position="199"/>
        <end position="219"/>
    </location>
</feature>
<feature type="topological domain" description="Cytoplasmic" evidence="1">
    <location>
        <begin position="220"/>
        <end position="239"/>
    </location>
</feature>
<feature type="transmembrane region" description="Helical; Name=6" evidence="1">
    <location>
        <begin position="240"/>
        <end position="260"/>
    </location>
</feature>
<feature type="topological domain" description="Extracellular" evidence="1">
    <location>
        <begin position="261"/>
        <end position="275"/>
    </location>
</feature>
<feature type="transmembrane region" description="Helical; Name=7" evidence="1">
    <location>
        <begin position="276"/>
        <end position="296"/>
    </location>
</feature>
<feature type="topological domain" description="Cytoplasmic" evidence="1">
    <location>
        <begin position="297"/>
        <end position="327"/>
    </location>
</feature>
<feature type="glycosylation site" description="N-linked (GlcNAc...) asparagine" evidence="1">
    <location>
        <position position="5"/>
    </location>
</feature>
<feature type="glycosylation site" description="N-linked (GlcNAc...) asparagine" evidence="1">
    <location>
        <position position="6"/>
    </location>
</feature>
<proteinExistence type="inferred from homology"/>
<name>O51T1_HUMAN</name>
<keyword id="KW-1003">Cell membrane</keyword>
<keyword id="KW-0297">G-protein coupled receptor</keyword>
<keyword id="KW-0325">Glycoprotein</keyword>
<keyword id="KW-0472">Membrane</keyword>
<keyword id="KW-0552">Olfaction</keyword>
<keyword id="KW-0675">Receptor</keyword>
<keyword id="KW-1185">Reference proteome</keyword>
<keyword id="KW-0716">Sensory transduction</keyword>
<keyword id="KW-0807">Transducer</keyword>
<keyword id="KW-0812">Transmembrane</keyword>
<keyword id="KW-1133">Transmembrane helix</keyword>
<reference key="1">
    <citation type="submission" date="2001-07" db="EMBL/GenBank/DDBJ databases">
        <title>Genome-wide discovery and analysis of human seven transmembrane helix receptor genes.</title>
        <authorList>
            <person name="Suwa M."/>
            <person name="Sato T."/>
            <person name="Okouchi I."/>
            <person name="Arita M."/>
            <person name="Futami K."/>
            <person name="Matsumoto S."/>
            <person name="Tsutsumi S."/>
            <person name="Aburatani H."/>
            <person name="Asai K."/>
            <person name="Akiyama Y."/>
        </authorList>
    </citation>
    <scope>NUCLEOTIDE SEQUENCE [GENOMIC DNA]</scope>
</reference>
<reference key="2">
    <citation type="journal article" date="2006" name="Nature">
        <title>Human chromosome 11 DNA sequence and analysis including novel gene identification.</title>
        <authorList>
            <person name="Taylor T.D."/>
            <person name="Noguchi H."/>
            <person name="Totoki Y."/>
            <person name="Toyoda A."/>
            <person name="Kuroki Y."/>
            <person name="Dewar K."/>
            <person name="Lloyd C."/>
            <person name="Itoh T."/>
            <person name="Takeda T."/>
            <person name="Kim D.-W."/>
            <person name="She X."/>
            <person name="Barlow K.F."/>
            <person name="Bloom T."/>
            <person name="Bruford E."/>
            <person name="Chang J.L."/>
            <person name="Cuomo C.A."/>
            <person name="Eichler E."/>
            <person name="FitzGerald M.G."/>
            <person name="Jaffe D.B."/>
            <person name="LaButti K."/>
            <person name="Nicol R."/>
            <person name="Park H.-S."/>
            <person name="Seaman C."/>
            <person name="Sougnez C."/>
            <person name="Yang X."/>
            <person name="Zimmer A.R."/>
            <person name="Zody M.C."/>
            <person name="Birren B.W."/>
            <person name="Nusbaum C."/>
            <person name="Fujiyama A."/>
            <person name="Hattori M."/>
            <person name="Rogers J."/>
            <person name="Lander E.S."/>
            <person name="Sakaki Y."/>
        </authorList>
    </citation>
    <scope>NUCLEOTIDE SEQUENCE [LARGE SCALE GENOMIC DNA]</scope>
</reference>
<reference key="3">
    <citation type="journal article" date="2004" name="Proc. Natl. Acad. Sci. U.S.A.">
        <title>The human olfactory receptor gene family.</title>
        <authorList>
            <person name="Malnic B."/>
            <person name="Godfrey P.A."/>
            <person name="Buck L.B."/>
        </authorList>
    </citation>
    <scope>IDENTIFICATION</scope>
</reference>
<reference key="4">
    <citation type="journal article" date="2004" name="Proc. Natl. Acad. Sci. U.S.A.">
        <authorList>
            <person name="Malnic B."/>
            <person name="Godfrey P.A."/>
            <person name="Buck L.B."/>
        </authorList>
    </citation>
    <scope>ERRATUM OF PUBMED:14983052</scope>
</reference>
<protein>
    <recommendedName>
        <fullName>Olfactory receptor 51T1</fullName>
    </recommendedName>
    <alternativeName>
        <fullName>Olfactory receptor OR11-26</fullName>
    </alternativeName>
</protein>
<organism>
    <name type="scientific">Homo sapiens</name>
    <name type="common">Human</name>
    <dbReference type="NCBI Taxonomy" id="9606"/>
    <lineage>
        <taxon>Eukaryota</taxon>
        <taxon>Metazoa</taxon>
        <taxon>Chordata</taxon>
        <taxon>Craniata</taxon>
        <taxon>Vertebrata</taxon>
        <taxon>Euteleostomi</taxon>
        <taxon>Mammalia</taxon>
        <taxon>Eutheria</taxon>
        <taxon>Euarchontoglires</taxon>
        <taxon>Primates</taxon>
        <taxon>Haplorrhini</taxon>
        <taxon>Catarrhini</taxon>
        <taxon>Hominidae</taxon>
        <taxon>Homo</taxon>
    </lineage>
</organism>
<evidence type="ECO:0000255" key="1"/>
<evidence type="ECO:0000255" key="2">
    <source>
        <dbReference type="PROSITE-ProRule" id="PRU00521"/>
    </source>
</evidence>
<evidence type="ECO:0000305" key="3"/>
<sequence>MAIFNNTTSSSSNFLLTAFPGLECAHVWISIPVCCLYTIALLGNSMIFLVIITKRRLHKPMYYFLSMLAAVDLCLTITTLPTVLGVLWFHAREISFKACFIQMFFVHAFSLLESSVLVAMAFDRFVAICNPLNYATILTDRMVLVIGLVICIRPAVFLLPLLVAINTVSFHGGHELSHPFCYHPEVIKYTYSKPWISSFWGLFLQLYLNGTDVLFILFSYVLILRTVLGIVARKKQQKALSTCVCHICAVTIFYVPLISLSLAHRLFHSTPRVLCSTLANIYLLLPPVLNPIIYSLKTKTIRQAMFQLLQSKGSWGFNVRGLRGRWD</sequence>